<proteinExistence type="predicted"/>
<comment type="subcellular location">
    <subcellularLocation>
        <location evidence="2">Membrane</location>
        <topology evidence="2">Single-pass membrane protein</topology>
    </subcellularLocation>
</comment>
<dbReference type="EMBL" id="AAFI02000055">
    <property type="protein sequence ID" value="EAL65741.1"/>
    <property type="molecule type" value="Genomic_DNA"/>
</dbReference>
<dbReference type="RefSeq" id="XP_639060.1">
    <property type="nucleotide sequence ID" value="XM_633968.1"/>
</dbReference>
<dbReference type="FunCoup" id="Q54R31">
    <property type="interactions" value="640"/>
</dbReference>
<dbReference type="PaxDb" id="44689-DDB0218498"/>
<dbReference type="EnsemblProtists" id="EAL65741">
    <property type="protein sequence ID" value="EAL65741"/>
    <property type="gene ID" value="DDB_G0283513"/>
</dbReference>
<dbReference type="GeneID" id="8624085"/>
<dbReference type="KEGG" id="ddi:DDB_G0283513"/>
<dbReference type="dictyBase" id="DDB_G0283513"/>
<dbReference type="HOGENOM" id="CLU_210588_0_0_1"/>
<dbReference type="InParanoid" id="Q54R31"/>
<dbReference type="PRO" id="PR:Q54R31"/>
<dbReference type="Proteomes" id="UP000002195">
    <property type="component" value="Chromosome 4"/>
</dbReference>
<dbReference type="GO" id="GO:0016020">
    <property type="term" value="C:membrane"/>
    <property type="evidence" value="ECO:0007669"/>
    <property type="project" value="UniProtKB-SubCell"/>
</dbReference>
<protein>
    <recommendedName>
        <fullName>Uncharacterized transmembrane protein DDB_G0283513</fullName>
    </recommendedName>
</protein>
<gene>
    <name type="ORF">DDB_G0283513</name>
</gene>
<evidence type="ECO:0000255" key="1"/>
<evidence type="ECO:0000305" key="2"/>
<organism>
    <name type="scientific">Dictyostelium discoideum</name>
    <name type="common">Social amoeba</name>
    <dbReference type="NCBI Taxonomy" id="44689"/>
    <lineage>
        <taxon>Eukaryota</taxon>
        <taxon>Amoebozoa</taxon>
        <taxon>Evosea</taxon>
        <taxon>Eumycetozoa</taxon>
        <taxon>Dictyostelia</taxon>
        <taxon>Dictyosteliales</taxon>
        <taxon>Dictyosteliaceae</taxon>
        <taxon>Dictyostelium</taxon>
    </lineage>
</organism>
<name>Y8498_DICDI</name>
<accession>Q54R31</accession>
<feature type="chain" id="PRO_0000350910" description="Uncharacterized transmembrane protein DDB_G0283513">
    <location>
        <begin position="1"/>
        <end position="57"/>
    </location>
</feature>
<feature type="transmembrane region" description="Helical" evidence="1">
    <location>
        <begin position="34"/>
        <end position="51"/>
    </location>
</feature>
<keyword id="KW-0472">Membrane</keyword>
<keyword id="KW-1185">Reference proteome</keyword>
<keyword id="KW-0812">Transmembrane</keyword>
<keyword id="KW-1133">Transmembrane helix</keyword>
<sequence>MLFKSLQSISSVSSIQKNQISSVSVGSSQSNNNTALLDAAAVVVVPGLLAATAVAHI</sequence>
<reference key="1">
    <citation type="journal article" date="2005" name="Nature">
        <title>The genome of the social amoeba Dictyostelium discoideum.</title>
        <authorList>
            <person name="Eichinger L."/>
            <person name="Pachebat J.A."/>
            <person name="Gloeckner G."/>
            <person name="Rajandream M.A."/>
            <person name="Sucgang R."/>
            <person name="Berriman M."/>
            <person name="Song J."/>
            <person name="Olsen R."/>
            <person name="Szafranski K."/>
            <person name="Xu Q."/>
            <person name="Tunggal B."/>
            <person name="Kummerfeld S."/>
            <person name="Madera M."/>
            <person name="Konfortov B.A."/>
            <person name="Rivero F."/>
            <person name="Bankier A.T."/>
            <person name="Lehmann R."/>
            <person name="Hamlin N."/>
            <person name="Davies R."/>
            <person name="Gaudet P."/>
            <person name="Fey P."/>
            <person name="Pilcher K."/>
            <person name="Chen G."/>
            <person name="Saunders D."/>
            <person name="Sodergren E.J."/>
            <person name="Davis P."/>
            <person name="Kerhornou A."/>
            <person name="Nie X."/>
            <person name="Hall N."/>
            <person name="Anjard C."/>
            <person name="Hemphill L."/>
            <person name="Bason N."/>
            <person name="Farbrother P."/>
            <person name="Desany B."/>
            <person name="Just E."/>
            <person name="Morio T."/>
            <person name="Rost R."/>
            <person name="Churcher C.M."/>
            <person name="Cooper J."/>
            <person name="Haydock S."/>
            <person name="van Driessche N."/>
            <person name="Cronin A."/>
            <person name="Goodhead I."/>
            <person name="Muzny D.M."/>
            <person name="Mourier T."/>
            <person name="Pain A."/>
            <person name="Lu M."/>
            <person name="Harper D."/>
            <person name="Lindsay R."/>
            <person name="Hauser H."/>
            <person name="James K.D."/>
            <person name="Quiles M."/>
            <person name="Madan Babu M."/>
            <person name="Saito T."/>
            <person name="Buchrieser C."/>
            <person name="Wardroper A."/>
            <person name="Felder M."/>
            <person name="Thangavelu M."/>
            <person name="Johnson D."/>
            <person name="Knights A."/>
            <person name="Loulseged H."/>
            <person name="Mungall K.L."/>
            <person name="Oliver K."/>
            <person name="Price C."/>
            <person name="Quail M.A."/>
            <person name="Urushihara H."/>
            <person name="Hernandez J."/>
            <person name="Rabbinowitsch E."/>
            <person name="Steffen D."/>
            <person name="Sanders M."/>
            <person name="Ma J."/>
            <person name="Kohara Y."/>
            <person name="Sharp S."/>
            <person name="Simmonds M.N."/>
            <person name="Spiegler S."/>
            <person name="Tivey A."/>
            <person name="Sugano S."/>
            <person name="White B."/>
            <person name="Walker D."/>
            <person name="Woodward J.R."/>
            <person name="Winckler T."/>
            <person name="Tanaka Y."/>
            <person name="Shaulsky G."/>
            <person name="Schleicher M."/>
            <person name="Weinstock G.M."/>
            <person name="Rosenthal A."/>
            <person name="Cox E.C."/>
            <person name="Chisholm R.L."/>
            <person name="Gibbs R.A."/>
            <person name="Loomis W.F."/>
            <person name="Platzer M."/>
            <person name="Kay R.R."/>
            <person name="Williams J.G."/>
            <person name="Dear P.H."/>
            <person name="Noegel A.A."/>
            <person name="Barrell B.G."/>
            <person name="Kuspa A."/>
        </authorList>
    </citation>
    <scope>NUCLEOTIDE SEQUENCE [LARGE SCALE GENOMIC DNA]</scope>
    <source>
        <strain>AX4</strain>
    </source>
</reference>